<protein>
    <recommendedName>
        <fullName evidence="1">ATP synthase subunit alpha</fullName>
        <ecNumber evidence="1">7.1.2.2</ecNumber>
    </recommendedName>
    <alternativeName>
        <fullName evidence="1">ATP synthase F1 sector subunit alpha</fullName>
    </alternativeName>
    <alternativeName>
        <fullName evidence="1">F-ATPase subunit alpha</fullName>
    </alternativeName>
</protein>
<accession>A5IUQ0</accession>
<keyword id="KW-0066">ATP synthesis</keyword>
<keyword id="KW-0067">ATP-binding</keyword>
<keyword id="KW-1003">Cell membrane</keyword>
<keyword id="KW-0139">CF(1)</keyword>
<keyword id="KW-0375">Hydrogen ion transport</keyword>
<keyword id="KW-0406">Ion transport</keyword>
<keyword id="KW-0472">Membrane</keyword>
<keyword id="KW-0547">Nucleotide-binding</keyword>
<keyword id="KW-1278">Translocase</keyword>
<keyword id="KW-0813">Transport</keyword>
<name>ATPA_STAA9</name>
<organism>
    <name type="scientific">Staphylococcus aureus (strain JH9)</name>
    <dbReference type="NCBI Taxonomy" id="359786"/>
    <lineage>
        <taxon>Bacteria</taxon>
        <taxon>Bacillati</taxon>
        <taxon>Bacillota</taxon>
        <taxon>Bacilli</taxon>
        <taxon>Bacillales</taxon>
        <taxon>Staphylococcaceae</taxon>
        <taxon>Staphylococcus</taxon>
    </lineage>
</organism>
<proteinExistence type="inferred from homology"/>
<comment type="function">
    <text evidence="1">Produces ATP from ADP in the presence of a proton gradient across the membrane. The alpha chain is a regulatory subunit.</text>
</comment>
<comment type="catalytic activity">
    <reaction evidence="1">
        <text>ATP + H2O + 4 H(+)(in) = ADP + phosphate + 5 H(+)(out)</text>
        <dbReference type="Rhea" id="RHEA:57720"/>
        <dbReference type="ChEBI" id="CHEBI:15377"/>
        <dbReference type="ChEBI" id="CHEBI:15378"/>
        <dbReference type="ChEBI" id="CHEBI:30616"/>
        <dbReference type="ChEBI" id="CHEBI:43474"/>
        <dbReference type="ChEBI" id="CHEBI:456216"/>
        <dbReference type="EC" id="7.1.2.2"/>
    </reaction>
</comment>
<comment type="subunit">
    <text evidence="1">F-type ATPases have 2 components, CF(1) - the catalytic core - and CF(0) - the membrane proton channel. CF(1) has five subunits: alpha(3), beta(3), gamma(1), delta(1), epsilon(1). CF(0) has three main subunits: a(1), b(2) and c(9-12). The alpha and beta chains form an alternating ring which encloses part of the gamma chain. CF(1) is attached to CF(0) by a central stalk formed by the gamma and epsilon chains, while a peripheral stalk is formed by the delta and b chains.</text>
</comment>
<comment type="subcellular location">
    <subcellularLocation>
        <location evidence="1">Cell membrane</location>
        <topology evidence="1">Peripheral membrane protein</topology>
    </subcellularLocation>
</comment>
<comment type="similarity">
    <text evidence="1">Belongs to the ATPase alpha/beta chains family.</text>
</comment>
<dbReference type="EC" id="7.1.2.2" evidence="1"/>
<dbReference type="EMBL" id="CP000703">
    <property type="protein sequence ID" value="ABQ49923.1"/>
    <property type="molecule type" value="Genomic_DNA"/>
</dbReference>
<dbReference type="RefSeq" id="WP_000974881.1">
    <property type="nucleotide sequence ID" value="NC_009487.1"/>
</dbReference>
<dbReference type="SMR" id="A5IUQ0"/>
<dbReference type="KEGG" id="saj:SaurJH9_2141"/>
<dbReference type="HOGENOM" id="CLU_010091_2_1_9"/>
<dbReference type="GO" id="GO:0005886">
    <property type="term" value="C:plasma membrane"/>
    <property type="evidence" value="ECO:0007669"/>
    <property type="project" value="UniProtKB-SubCell"/>
</dbReference>
<dbReference type="GO" id="GO:0045259">
    <property type="term" value="C:proton-transporting ATP synthase complex"/>
    <property type="evidence" value="ECO:0007669"/>
    <property type="project" value="UniProtKB-KW"/>
</dbReference>
<dbReference type="GO" id="GO:0043531">
    <property type="term" value="F:ADP binding"/>
    <property type="evidence" value="ECO:0007669"/>
    <property type="project" value="TreeGrafter"/>
</dbReference>
<dbReference type="GO" id="GO:0005524">
    <property type="term" value="F:ATP binding"/>
    <property type="evidence" value="ECO:0007669"/>
    <property type="project" value="UniProtKB-UniRule"/>
</dbReference>
<dbReference type="GO" id="GO:0046933">
    <property type="term" value="F:proton-transporting ATP synthase activity, rotational mechanism"/>
    <property type="evidence" value="ECO:0007669"/>
    <property type="project" value="UniProtKB-UniRule"/>
</dbReference>
<dbReference type="CDD" id="cd18113">
    <property type="entry name" value="ATP-synt_F1_alpha_C"/>
    <property type="match status" value="1"/>
</dbReference>
<dbReference type="CDD" id="cd18116">
    <property type="entry name" value="ATP-synt_F1_alpha_N"/>
    <property type="match status" value="1"/>
</dbReference>
<dbReference type="CDD" id="cd01132">
    <property type="entry name" value="F1-ATPase_alpha_CD"/>
    <property type="match status" value="1"/>
</dbReference>
<dbReference type="FunFam" id="1.20.150.20:FF:000001">
    <property type="entry name" value="ATP synthase subunit alpha"/>
    <property type="match status" value="1"/>
</dbReference>
<dbReference type="FunFam" id="2.40.30.20:FF:000001">
    <property type="entry name" value="ATP synthase subunit alpha"/>
    <property type="match status" value="1"/>
</dbReference>
<dbReference type="FunFam" id="3.40.50.300:FF:000002">
    <property type="entry name" value="ATP synthase subunit alpha"/>
    <property type="match status" value="1"/>
</dbReference>
<dbReference type="Gene3D" id="2.40.30.20">
    <property type="match status" value="1"/>
</dbReference>
<dbReference type="Gene3D" id="1.20.150.20">
    <property type="entry name" value="ATP synthase alpha/beta chain, C-terminal domain"/>
    <property type="match status" value="1"/>
</dbReference>
<dbReference type="Gene3D" id="3.40.50.300">
    <property type="entry name" value="P-loop containing nucleotide triphosphate hydrolases"/>
    <property type="match status" value="1"/>
</dbReference>
<dbReference type="HAMAP" id="MF_01346">
    <property type="entry name" value="ATP_synth_alpha_bact"/>
    <property type="match status" value="1"/>
</dbReference>
<dbReference type="InterPro" id="IPR023366">
    <property type="entry name" value="ATP_synth_asu-like_sf"/>
</dbReference>
<dbReference type="InterPro" id="IPR000793">
    <property type="entry name" value="ATP_synth_asu_C"/>
</dbReference>
<dbReference type="InterPro" id="IPR038376">
    <property type="entry name" value="ATP_synth_asu_C_sf"/>
</dbReference>
<dbReference type="InterPro" id="IPR033732">
    <property type="entry name" value="ATP_synth_F1_a_nt-bd_dom"/>
</dbReference>
<dbReference type="InterPro" id="IPR005294">
    <property type="entry name" value="ATP_synth_F1_asu"/>
</dbReference>
<dbReference type="InterPro" id="IPR020003">
    <property type="entry name" value="ATPase_a/bsu_AS"/>
</dbReference>
<dbReference type="InterPro" id="IPR004100">
    <property type="entry name" value="ATPase_F1/V1/A1_a/bsu_N"/>
</dbReference>
<dbReference type="InterPro" id="IPR036121">
    <property type="entry name" value="ATPase_F1/V1/A1_a/bsu_N_sf"/>
</dbReference>
<dbReference type="InterPro" id="IPR000194">
    <property type="entry name" value="ATPase_F1/V1/A1_a/bsu_nucl-bd"/>
</dbReference>
<dbReference type="InterPro" id="IPR027417">
    <property type="entry name" value="P-loop_NTPase"/>
</dbReference>
<dbReference type="NCBIfam" id="TIGR00962">
    <property type="entry name" value="atpA"/>
    <property type="match status" value="1"/>
</dbReference>
<dbReference type="NCBIfam" id="NF009884">
    <property type="entry name" value="PRK13343.1"/>
    <property type="match status" value="1"/>
</dbReference>
<dbReference type="PANTHER" id="PTHR48082">
    <property type="entry name" value="ATP SYNTHASE SUBUNIT ALPHA, MITOCHONDRIAL"/>
    <property type="match status" value="1"/>
</dbReference>
<dbReference type="PANTHER" id="PTHR48082:SF2">
    <property type="entry name" value="ATP SYNTHASE SUBUNIT ALPHA, MITOCHONDRIAL"/>
    <property type="match status" value="1"/>
</dbReference>
<dbReference type="Pfam" id="PF00006">
    <property type="entry name" value="ATP-synt_ab"/>
    <property type="match status" value="1"/>
</dbReference>
<dbReference type="Pfam" id="PF00306">
    <property type="entry name" value="ATP-synt_ab_C"/>
    <property type="match status" value="1"/>
</dbReference>
<dbReference type="Pfam" id="PF02874">
    <property type="entry name" value="ATP-synt_ab_N"/>
    <property type="match status" value="1"/>
</dbReference>
<dbReference type="PIRSF" id="PIRSF039088">
    <property type="entry name" value="F_ATPase_subunit_alpha"/>
    <property type="match status" value="1"/>
</dbReference>
<dbReference type="SUPFAM" id="SSF47917">
    <property type="entry name" value="C-terminal domain of alpha and beta subunits of F1 ATP synthase"/>
    <property type="match status" value="1"/>
</dbReference>
<dbReference type="SUPFAM" id="SSF50615">
    <property type="entry name" value="N-terminal domain of alpha and beta subunits of F1 ATP synthase"/>
    <property type="match status" value="1"/>
</dbReference>
<dbReference type="SUPFAM" id="SSF52540">
    <property type="entry name" value="P-loop containing nucleoside triphosphate hydrolases"/>
    <property type="match status" value="1"/>
</dbReference>
<dbReference type="PROSITE" id="PS00152">
    <property type="entry name" value="ATPASE_ALPHA_BETA"/>
    <property type="match status" value="1"/>
</dbReference>
<gene>
    <name evidence="1" type="primary">atpA</name>
    <name type="ordered locus">SaurJH9_2141</name>
</gene>
<sequence length="502" mass="54584">MAIKAEEISALLRSQIENYESEMSVTDVGTVLQIGDGIALIHGLNDVMAGELVEFHNGVLGLAQNLEESNVGVVILGPYTGITEGDEVKRTGRIMEVPVGEELIGRVVNPLGQPIDGQGPINTTKTRPVEKKATGVMDRKSVDEPLQTGIKAIDALVPIGRGQRELIIGDRQTGKTTIAIDTILNQKDQGTICIYVAIGQKDSTVRANVEKLRQAGALDYTIVVAASASEPSPLLYIAPYSGVTMGEEFMFNGKHVLIVYDDLTKQAAAYRELSLLLRRPPGREAYPGDVFYLHSRLLERAAKLNDDLGGGSITALPIIETQAGDISAYVPTNVISITDGQIFLQSDLFFSGVRPAINAGQSVSRVGGSAQIKAMKKVAGTLRLDLASYRELESFAQFGSDLDEFTASKLERGKRTVEVLKQDQNKPLPVEHQVLIIYALTKGYLDDIPVVDITRFEDELNHWAESNATELLNEIRETGGLPDAEKFDTAINEFKKSFSKSE</sequence>
<reference key="1">
    <citation type="submission" date="2007-05" db="EMBL/GenBank/DDBJ databases">
        <title>Complete sequence of chromosome of Staphylococcus aureus subsp. aureus JH9.</title>
        <authorList>
            <consortium name="US DOE Joint Genome Institute"/>
            <person name="Copeland A."/>
            <person name="Lucas S."/>
            <person name="Lapidus A."/>
            <person name="Barry K."/>
            <person name="Detter J.C."/>
            <person name="Glavina del Rio T."/>
            <person name="Hammon N."/>
            <person name="Israni S."/>
            <person name="Pitluck S."/>
            <person name="Chain P."/>
            <person name="Malfatti S."/>
            <person name="Shin M."/>
            <person name="Vergez L."/>
            <person name="Schmutz J."/>
            <person name="Larimer F."/>
            <person name="Land M."/>
            <person name="Hauser L."/>
            <person name="Kyrpides N."/>
            <person name="Kim E."/>
            <person name="Tomasz A."/>
            <person name="Richardson P."/>
        </authorList>
    </citation>
    <scope>NUCLEOTIDE SEQUENCE [LARGE SCALE GENOMIC DNA]</scope>
    <source>
        <strain>JH9</strain>
    </source>
</reference>
<evidence type="ECO:0000255" key="1">
    <source>
        <dbReference type="HAMAP-Rule" id="MF_01346"/>
    </source>
</evidence>
<feature type="chain" id="PRO_1000086900" description="ATP synthase subunit alpha">
    <location>
        <begin position="1"/>
        <end position="502"/>
    </location>
</feature>
<feature type="binding site" evidence="1">
    <location>
        <begin position="169"/>
        <end position="176"/>
    </location>
    <ligand>
        <name>ATP</name>
        <dbReference type="ChEBI" id="CHEBI:30616"/>
    </ligand>
</feature>
<feature type="site" description="Required for activity" evidence="1">
    <location>
        <position position="362"/>
    </location>
</feature>